<proteinExistence type="inferred from homology"/>
<feature type="chain" id="PRO_1000071479" description="Triosephosphate isomerase">
    <location>
        <begin position="1"/>
        <end position="241"/>
    </location>
</feature>
<feature type="active site" description="Electrophile" evidence="1">
    <location>
        <position position="93"/>
    </location>
</feature>
<feature type="active site" description="Proton acceptor" evidence="1">
    <location>
        <position position="163"/>
    </location>
</feature>
<feature type="binding site" evidence="1">
    <location>
        <begin position="8"/>
        <end position="10"/>
    </location>
    <ligand>
        <name>substrate</name>
    </ligand>
</feature>
<feature type="binding site" evidence="1">
    <location>
        <position position="169"/>
    </location>
    <ligand>
        <name>substrate</name>
    </ligand>
</feature>
<feature type="binding site" evidence="1">
    <location>
        <position position="205"/>
    </location>
    <ligand>
        <name>substrate</name>
    </ligand>
</feature>
<feature type="binding site" evidence="1">
    <location>
        <begin position="226"/>
        <end position="227"/>
    </location>
    <ligand>
        <name>substrate</name>
    </ligand>
</feature>
<sequence>MKKIFAANWKLFKSPKETREFFGQFKELAGKATGEVVFFPSAISLEAASESLKGTSIKFGAQNCYFQAQGAFTGENSAQVVKDLGGSYVLIGHSERRAIFGEGDALVADKVAFVQGLGLTPMLCIGETLQERESAKTFRVLETQLNLGLAKADKTKPVVVAYEPVWAIGTGKVATPEQVAETHTDVFNILKALGFETAPILYGGSVKPDNAAGLIKQPHVNGFLVGGASLEAKSFSEIASV</sequence>
<evidence type="ECO:0000255" key="1">
    <source>
        <dbReference type="HAMAP-Rule" id="MF_00147"/>
    </source>
</evidence>
<accession>Q6MP18</accession>
<gene>
    <name evidence="1" type="primary">tpiA</name>
    <name type="ordered locus">Bd1051</name>
</gene>
<protein>
    <recommendedName>
        <fullName evidence="1">Triosephosphate isomerase</fullName>
        <shortName evidence="1">TIM</shortName>
        <shortName evidence="1">TPI</shortName>
        <ecNumber evidence="1">5.3.1.1</ecNumber>
    </recommendedName>
    <alternativeName>
        <fullName evidence="1">Triose-phosphate isomerase</fullName>
    </alternativeName>
</protein>
<dbReference type="EC" id="5.3.1.1" evidence="1"/>
<dbReference type="EMBL" id="BX842648">
    <property type="protein sequence ID" value="CAE78980.1"/>
    <property type="molecule type" value="Genomic_DNA"/>
</dbReference>
<dbReference type="RefSeq" id="WP_011163582.1">
    <property type="nucleotide sequence ID" value="NC_005363.1"/>
</dbReference>
<dbReference type="SMR" id="Q6MP18"/>
<dbReference type="STRING" id="264462.Bd1051"/>
<dbReference type="GeneID" id="93012110"/>
<dbReference type="KEGG" id="bba:Bd1051"/>
<dbReference type="eggNOG" id="COG0149">
    <property type="taxonomic scope" value="Bacteria"/>
</dbReference>
<dbReference type="HOGENOM" id="CLU_024251_2_1_7"/>
<dbReference type="UniPathway" id="UPA00109">
    <property type="reaction ID" value="UER00189"/>
</dbReference>
<dbReference type="UniPathway" id="UPA00138"/>
<dbReference type="Proteomes" id="UP000008080">
    <property type="component" value="Chromosome"/>
</dbReference>
<dbReference type="GO" id="GO:0005829">
    <property type="term" value="C:cytosol"/>
    <property type="evidence" value="ECO:0007669"/>
    <property type="project" value="TreeGrafter"/>
</dbReference>
<dbReference type="GO" id="GO:0004807">
    <property type="term" value="F:triose-phosphate isomerase activity"/>
    <property type="evidence" value="ECO:0007669"/>
    <property type="project" value="UniProtKB-UniRule"/>
</dbReference>
<dbReference type="GO" id="GO:0006094">
    <property type="term" value="P:gluconeogenesis"/>
    <property type="evidence" value="ECO:0007669"/>
    <property type="project" value="UniProtKB-UniRule"/>
</dbReference>
<dbReference type="GO" id="GO:0046166">
    <property type="term" value="P:glyceraldehyde-3-phosphate biosynthetic process"/>
    <property type="evidence" value="ECO:0007669"/>
    <property type="project" value="TreeGrafter"/>
</dbReference>
<dbReference type="GO" id="GO:0019563">
    <property type="term" value="P:glycerol catabolic process"/>
    <property type="evidence" value="ECO:0007669"/>
    <property type="project" value="TreeGrafter"/>
</dbReference>
<dbReference type="GO" id="GO:0006096">
    <property type="term" value="P:glycolytic process"/>
    <property type="evidence" value="ECO:0007669"/>
    <property type="project" value="UniProtKB-UniRule"/>
</dbReference>
<dbReference type="CDD" id="cd00311">
    <property type="entry name" value="TIM"/>
    <property type="match status" value="1"/>
</dbReference>
<dbReference type="FunFam" id="3.20.20.70:FF:000016">
    <property type="entry name" value="Triosephosphate isomerase"/>
    <property type="match status" value="1"/>
</dbReference>
<dbReference type="Gene3D" id="3.20.20.70">
    <property type="entry name" value="Aldolase class I"/>
    <property type="match status" value="1"/>
</dbReference>
<dbReference type="HAMAP" id="MF_00147_B">
    <property type="entry name" value="TIM_B"/>
    <property type="match status" value="1"/>
</dbReference>
<dbReference type="InterPro" id="IPR013785">
    <property type="entry name" value="Aldolase_TIM"/>
</dbReference>
<dbReference type="InterPro" id="IPR035990">
    <property type="entry name" value="TIM_sf"/>
</dbReference>
<dbReference type="InterPro" id="IPR022896">
    <property type="entry name" value="TrioseP_Isoase_bac/euk"/>
</dbReference>
<dbReference type="InterPro" id="IPR000652">
    <property type="entry name" value="Triosephosphate_isomerase"/>
</dbReference>
<dbReference type="InterPro" id="IPR020861">
    <property type="entry name" value="Triosephosphate_isomerase_AS"/>
</dbReference>
<dbReference type="NCBIfam" id="TIGR00419">
    <property type="entry name" value="tim"/>
    <property type="match status" value="1"/>
</dbReference>
<dbReference type="PANTHER" id="PTHR21139">
    <property type="entry name" value="TRIOSEPHOSPHATE ISOMERASE"/>
    <property type="match status" value="1"/>
</dbReference>
<dbReference type="PANTHER" id="PTHR21139:SF42">
    <property type="entry name" value="TRIOSEPHOSPHATE ISOMERASE"/>
    <property type="match status" value="1"/>
</dbReference>
<dbReference type="Pfam" id="PF00121">
    <property type="entry name" value="TIM"/>
    <property type="match status" value="1"/>
</dbReference>
<dbReference type="SUPFAM" id="SSF51351">
    <property type="entry name" value="Triosephosphate isomerase (TIM)"/>
    <property type="match status" value="1"/>
</dbReference>
<dbReference type="PROSITE" id="PS00171">
    <property type="entry name" value="TIM_1"/>
    <property type="match status" value="1"/>
</dbReference>
<dbReference type="PROSITE" id="PS51440">
    <property type="entry name" value="TIM_2"/>
    <property type="match status" value="1"/>
</dbReference>
<keyword id="KW-0963">Cytoplasm</keyword>
<keyword id="KW-0312">Gluconeogenesis</keyword>
<keyword id="KW-0324">Glycolysis</keyword>
<keyword id="KW-0413">Isomerase</keyword>
<keyword id="KW-1185">Reference proteome</keyword>
<comment type="function">
    <text evidence="1">Involved in the gluconeogenesis. Catalyzes stereospecifically the conversion of dihydroxyacetone phosphate (DHAP) to D-glyceraldehyde-3-phosphate (G3P).</text>
</comment>
<comment type="catalytic activity">
    <reaction evidence="1">
        <text>D-glyceraldehyde 3-phosphate = dihydroxyacetone phosphate</text>
        <dbReference type="Rhea" id="RHEA:18585"/>
        <dbReference type="ChEBI" id="CHEBI:57642"/>
        <dbReference type="ChEBI" id="CHEBI:59776"/>
        <dbReference type="EC" id="5.3.1.1"/>
    </reaction>
</comment>
<comment type="pathway">
    <text evidence="1">Carbohydrate biosynthesis; gluconeogenesis.</text>
</comment>
<comment type="pathway">
    <text evidence="1">Carbohydrate degradation; glycolysis; D-glyceraldehyde 3-phosphate from glycerone phosphate: step 1/1.</text>
</comment>
<comment type="subunit">
    <text evidence="1">Homodimer.</text>
</comment>
<comment type="subcellular location">
    <subcellularLocation>
        <location evidence="1">Cytoplasm</location>
    </subcellularLocation>
</comment>
<comment type="similarity">
    <text evidence="1">Belongs to the triosephosphate isomerase family.</text>
</comment>
<reference key="1">
    <citation type="journal article" date="2004" name="Science">
        <title>A predator unmasked: life cycle of Bdellovibrio bacteriovorus from a genomic perspective.</title>
        <authorList>
            <person name="Rendulic S."/>
            <person name="Jagtap P."/>
            <person name="Rosinus A."/>
            <person name="Eppinger M."/>
            <person name="Baar C."/>
            <person name="Lanz C."/>
            <person name="Keller H."/>
            <person name="Lambert C."/>
            <person name="Evans K.J."/>
            <person name="Goesmann A."/>
            <person name="Meyer F."/>
            <person name="Sockett R.E."/>
            <person name="Schuster S.C."/>
        </authorList>
    </citation>
    <scope>NUCLEOTIDE SEQUENCE [LARGE SCALE GENOMIC DNA]</scope>
    <source>
        <strain>ATCC 15356 / DSM 50701 / NCIMB 9529 / HD100</strain>
    </source>
</reference>
<name>TPIS_BDEBA</name>
<organism>
    <name type="scientific">Bdellovibrio bacteriovorus (strain ATCC 15356 / DSM 50701 / NCIMB 9529 / HD100)</name>
    <dbReference type="NCBI Taxonomy" id="264462"/>
    <lineage>
        <taxon>Bacteria</taxon>
        <taxon>Pseudomonadati</taxon>
        <taxon>Bdellovibrionota</taxon>
        <taxon>Bdellovibrionia</taxon>
        <taxon>Bdellovibrionales</taxon>
        <taxon>Pseudobdellovibrionaceae</taxon>
        <taxon>Bdellovibrio</taxon>
    </lineage>
</organism>